<comment type="catalytic activity">
    <reaction evidence="1">
        <text>tRNA(Leu) + L-leucine + ATP = L-leucyl-tRNA(Leu) + AMP + diphosphate</text>
        <dbReference type="Rhea" id="RHEA:11688"/>
        <dbReference type="Rhea" id="RHEA-COMP:9613"/>
        <dbReference type="Rhea" id="RHEA-COMP:9622"/>
        <dbReference type="ChEBI" id="CHEBI:30616"/>
        <dbReference type="ChEBI" id="CHEBI:33019"/>
        <dbReference type="ChEBI" id="CHEBI:57427"/>
        <dbReference type="ChEBI" id="CHEBI:78442"/>
        <dbReference type="ChEBI" id="CHEBI:78494"/>
        <dbReference type="ChEBI" id="CHEBI:456215"/>
        <dbReference type="EC" id="6.1.1.4"/>
    </reaction>
</comment>
<comment type="subcellular location">
    <subcellularLocation>
        <location evidence="1">Cytoplasm</location>
    </subcellularLocation>
</comment>
<comment type="similarity">
    <text evidence="1">Belongs to the class-I aminoacyl-tRNA synthetase family.</text>
</comment>
<dbReference type="EC" id="6.1.1.4" evidence="1"/>
<dbReference type="EMBL" id="AM406670">
    <property type="protein sequence ID" value="CAL95831.1"/>
    <property type="molecule type" value="Genomic_DNA"/>
</dbReference>
<dbReference type="RefSeq" id="WP_011766939.1">
    <property type="nucleotide sequence ID" value="NC_008702.1"/>
</dbReference>
<dbReference type="SMR" id="A1KAH5"/>
<dbReference type="STRING" id="62928.azo3215"/>
<dbReference type="KEGG" id="aoa:dqs_3352"/>
<dbReference type="KEGG" id="azo:azo3215"/>
<dbReference type="eggNOG" id="COG0495">
    <property type="taxonomic scope" value="Bacteria"/>
</dbReference>
<dbReference type="HOGENOM" id="CLU_004427_0_0_4"/>
<dbReference type="OrthoDB" id="9810365at2"/>
<dbReference type="Proteomes" id="UP000002588">
    <property type="component" value="Chromosome"/>
</dbReference>
<dbReference type="GO" id="GO:0005829">
    <property type="term" value="C:cytosol"/>
    <property type="evidence" value="ECO:0007669"/>
    <property type="project" value="TreeGrafter"/>
</dbReference>
<dbReference type="GO" id="GO:0002161">
    <property type="term" value="F:aminoacyl-tRNA deacylase activity"/>
    <property type="evidence" value="ECO:0007669"/>
    <property type="project" value="InterPro"/>
</dbReference>
<dbReference type="GO" id="GO:0005524">
    <property type="term" value="F:ATP binding"/>
    <property type="evidence" value="ECO:0007669"/>
    <property type="project" value="UniProtKB-UniRule"/>
</dbReference>
<dbReference type="GO" id="GO:0004823">
    <property type="term" value="F:leucine-tRNA ligase activity"/>
    <property type="evidence" value="ECO:0007669"/>
    <property type="project" value="UniProtKB-UniRule"/>
</dbReference>
<dbReference type="GO" id="GO:0006429">
    <property type="term" value="P:leucyl-tRNA aminoacylation"/>
    <property type="evidence" value="ECO:0007669"/>
    <property type="project" value="UniProtKB-UniRule"/>
</dbReference>
<dbReference type="CDD" id="cd07958">
    <property type="entry name" value="Anticodon_Ia_Leu_BEm"/>
    <property type="match status" value="1"/>
</dbReference>
<dbReference type="CDD" id="cd00812">
    <property type="entry name" value="LeuRS_core"/>
    <property type="match status" value="1"/>
</dbReference>
<dbReference type="FunFam" id="1.10.730.10:FF:000003">
    <property type="entry name" value="Leucine--tRNA ligase"/>
    <property type="match status" value="1"/>
</dbReference>
<dbReference type="FunFam" id="2.20.28.290:FF:000001">
    <property type="entry name" value="Leucine--tRNA ligase"/>
    <property type="match status" value="1"/>
</dbReference>
<dbReference type="FunFam" id="3.10.20.590:FF:000001">
    <property type="entry name" value="Leucine--tRNA ligase"/>
    <property type="match status" value="1"/>
</dbReference>
<dbReference type="FunFam" id="3.40.50.620:FF:000003">
    <property type="entry name" value="Leucine--tRNA ligase"/>
    <property type="match status" value="1"/>
</dbReference>
<dbReference type="FunFam" id="3.40.50.620:FF:000124">
    <property type="entry name" value="Leucine--tRNA ligase"/>
    <property type="match status" value="1"/>
</dbReference>
<dbReference type="FunFam" id="3.90.740.10:FF:000012">
    <property type="entry name" value="Leucine--tRNA ligase"/>
    <property type="match status" value="1"/>
</dbReference>
<dbReference type="Gene3D" id="2.20.28.290">
    <property type="match status" value="1"/>
</dbReference>
<dbReference type="Gene3D" id="3.10.20.590">
    <property type="match status" value="1"/>
</dbReference>
<dbReference type="Gene3D" id="3.40.50.620">
    <property type="entry name" value="HUPs"/>
    <property type="match status" value="2"/>
</dbReference>
<dbReference type="Gene3D" id="1.10.730.10">
    <property type="entry name" value="Isoleucyl-tRNA Synthetase, Domain 1"/>
    <property type="match status" value="1"/>
</dbReference>
<dbReference type="Gene3D" id="3.90.740.10">
    <property type="entry name" value="Valyl/Leucyl/Isoleucyl-tRNA synthetase, editing domain"/>
    <property type="match status" value="1"/>
</dbReference>
<dbReference type="HAMAP" id="MF_00049_B">
    <property type="entry name" value="Leu_tRNA_synth_B"/>
    <property type="match status" value="1"/>
</dbReference>
<dbReference type="InterPro" id="IPR001412">
    <property type="entry name" value="aa-tRNA-synth_I_CS"/>
</dbReference>
<dbReference type="InterPro" id="IPR002300">
    <property type="entry name" value="aa-tRNA-synth_Ia"/>
</dbReference>
<dbReference type="InterPro" id="IPR002302">
    <property type="entry name" value="Leu-tRNA-ligase"/>
</dbReference>
<dbReference type="InterPro" id="IPR025709">
    <property type="entry name" value="Leu_tRNA-synth_edit"/>
</dbReference>
<dbReference type="InterPro" id="IPR013155">
    <property type="entry name" value="M/V/L/I-tRNA-synth_anticd-bd"/>
</dbReference>
<dbReference type="InterPro" id="IPR015413">
    <property type="entry name" value="Methionyl/Leucyl_tRNA_Synth"/>
</dbReference>
<dbReference type="InterPro" id="IPR014729">
    <property type="entry name" value="Rossmann-like_a/b/a_fold"/>
</dbReference>
<dbReference type="InterPro" id="IPR009080">
    <property type="entry name" value="tRNAsynth_Ia_anticodon-bd"/>
</dbReference>
<dbReference type="InterPro" id="IPR009008">
    <property type="entry name" value="Val/Leu/Ile-tRNA-synth_edit"/>
</dbReference>
<dbReference type="NCBIfam" id="TIGR00396">
    <property type="entry name" value="leuS_bact"/>
    <property type="match status" value="1"/>
</dbReference>
<dbReference type="PANTHER" id="PTHR43740:SF2">
    <property type="entry name" value="LEUCINE--TRNA LIGASE, MITOCHONDRIAL"/>
    <property type="match status" value="1"/>
</dbReference>
<dbReference type="PANTHER" id="PTHR43740">
    <property type="entry name" value="LEUCYL-TRNA SYNTHETASE"/>
    <property type="match status" value="1"/>
</dbReference>
<dbReference type="Pfam" id="PF08264">
    <property type="entry name" value="Anticodon_1"/>
    <property type="match status" value="1"/>
</dbReference>
<dbReference type="Pfam" id="PF00133">
    <property type="entry name" value="tRNA-synt_1"/>
    <property type="match status" value="2"/>
</dbReference>
<dbReference type="Pfam" id="PF13603">
    <property type="entry name" value="tRNA-synt_1_2"/>
    <property type="match status" value="1"/>
</dbReference>
<dbReference type="Pfam" id="PF09334">
    <property type="entry name" value="tRNA-synt_1g"/>
    <property type="match status" value="1"/>
</dbReference>
<dbReference type="PRINTS" id="PR00985">
    <property type="entry name" value="TRNASYNTHLEU"/>
</dbReference>
<dbReference type="SUPFAM" id="SSF47323">
    <property type="entry name" value="Anticodon-binding domain of a subclass of class I aminoacyl-tRNA synthetases"/>
    <property type="match status" value="1"/>
</dbReference>
<dbReference type="SUPFAM" id="SSF52374">
    <property type="entry name" value="Nucleotidylyl transferase"/>
    <property type="match status" value="1"/>
</dbReference>
<dbReference type="SUPFAM" id="SSF50677">
    <property type="entry name" value="ValRS/IleRS/LeuRS editing domain"/>
    <property type="match status" value="1"/>
</dbReference>
<dbReference type="PROSITE" id="PS00178">
    <property type="entry name" value="AA_TRNA_LIGASE_I"/>
    <property type="match status" value="1"/>
</dbReference>
<evidence type="ECO:0000255" key="1">
    <source>
        <dbReference type="HAMAP-Rule" id="MF_00049"/>
    </source>
</evidence>
<proteinExistence type="inferred from homology"/>
<organism>
    <name type="scientific">Azoarcus sp. (strain BH72)</name>
    <dbReference type="NCBI Taxonomy" id="418699"/>
    <lineage>
        <taxon>Bacteria</taxon>
        <taxon>Pseudomonadati</taxon>
        <taxon>Pseudomonadota</taxon>
        <taxon>Betaproteobacteria</taxon>
        <taxon>Rhodocyclales</taxon>
        <taxon>Zoogloeaceae</taxon>
        <taxon>Azoarcus</taxon>
    </lineage>
</organism>
<accession>A1KAH5</accession>
<keyword id="KW-0030">Aminoacyl-tRNA synthetase</keyword>
<keyword id="KW-0067">ATP-binding</keyword>
<keyword id="KW-0963">Cytoplasm</keyword>
<keyword id="KW-0436">Ligase</keyword>
<keyword id="KW-0547">Nucleotide-binding</keyword>
<keyword id="KW-0648">Protein biosynthesis</keyword>
<keyword id="KW-1185">Reference proteome</keyword>
<protein>
    <recommendedName>
        <fullName evidence="1">Leucine--tRNA ligase</fullName>
        <ecNumber evidence="1">6.1.1.4</ecNumber>
    </recommendedName>
    <alternativeName>
        <fullName evidence="1">Leucyl-tRNA synthetase</fullName>
        <shortName evidence="1">LeuRS</shortName>
    </alternativeName>
</protein>
<reference key="1">
    <citation type="journal article" date="2006" name="Nat. Biotechnol.">
        <title>Complete genome of the mutualistic, N2-fixing grass endophyte Azoarcus sp. strain BH72.</title>
        <authorList>
            <person name="Krause A."/>
            <person name="Ramakumar A."/>
            <person name="Bartels D."/>
            <person name="Battistoni F."/>
            <person name="Bekel T."/>
            <person name="Boch J."/>
            <person name="Boehm M."/>
            <person name="Friedrich F."/>
            <person name="Hurek T."/>
            <person name="Krause L."/>
            <person name="Linke B."/>
            <person name="McHardy A.C."/>
            <person name="Sarkar A."/>
            <person name="Schneiker S."/>
            <person name="Syed A.A."/>
            <person name="Thauer R."/>
            <person name="Vorhoelter F.-J."/>
            <person name="Weidner S."/>
            <person name="Puehler A."/>
            <person name="Reinhold-Hurek B."/>
            <person name="Kaiser O."/>
            <person name="Goesmann A."/>
        </authorList>
    </citation>
    <scope>NUCLEOTIDE SEQUENCE [LARGE SCALE GENOMIC DNA]</scope>
    <source>
        <strain>BH72</strain>
    </source>
</reference>
<sequence length="873" mass="96943">MQDKYQPAAVETAAQQHWESTAAFRVTEDATRPKYYCLSMFPYPSGKLHMGHVRNYTIGDVLARFHRMRGYNVLQPMGWDAFGMPAENAAIQNNVPPAKWTYANIDYMKGQLKRLGFAIDWSREVATCTPEYYRWEQWLFTRLFEKGLIYKKLGTVNWDPVDETVLANEQVIDGRGWRSGALVEKREIPMYYMKITAYADELLEALDGLPGWPEQVKLMQKNWIGRSEGVEVHFPYDLSTIGSSGVLKVFTTRGDTLMGATYVAVAAEHPLATQAAAGNPELAAFIDECKQGGVAEADLATMEKKGMPTGLRVVHPITGEYLPVWVANYVLMGYGEGAVMAVPAHDERDFAFATKYKLPIKMVVRSTHDAYENVAAPWIDAYAEHGKLVNSGKYDNLHFQDAVDAIAADLAAKGLGNKRVQYRLRDWGISRQRYWGCPIPMVRCDDCGDVPVPDEQLPVVLPENVEITGRGSPLAKMPEFYQCSCPKCGKPARRETDTMDTFVESSWYFLRYASPDSTTAMVDERVNYWAPVDQYIGGIEHAILHLLYSRFFTRAMRDCGLVNVSEPFTNLLTQGMVVAETYYRELDGGKKQWLNPADVQVERDERGRITAAKLASDGLPVVIGGTEKMSKSKNNGVDPQALVDQYGADTARLFIIFAAPPDQQLEWSDSGVEGASRFLRRVWNFGHAFASEFRAALPAARALAAGTLPAALADVRREIHTHLKQANYDFGKHQFNTVVSAAMKILNALEKAPRDDAAAHAEVAEEGFSILVRLLSPITPHIAHALWQDCGFGGDIVQAAWPEPLEAALKQDEIELMLQVNGKLRGSVKVAADAGKSDIEALALASEAAQKFMEGKPPKKVVVVPGRLVNIVV</sequence>
<gene>
    <name evidence="1" type="primary">leuS</name>
    <name type="ordered locus">azo3215</name>
</gene>
<name>SYL_AZOSB</name>
<feature type="chain" id="PRO_1000009290" description="Leucine--tRNA ligase">
    <location>
        <begin position="1"/>
        <end position="873"/>
    </location>
</feature>
<feature type="short sequence motif" description="'HIGH' region">
    <location>
        <begin position="42"/>
        <end position="52"/>
    </location>
</feature>
<feature type="short sequence motif" description="'KMSKS' region">
    <location>
        <begin position="628"/>
        <end position="632"/>
    </location>
</feature>
<feature type="binding site" evidence="1">
    <location>
        <position position="631"/>
    </location>
    <ligand>
        <name>ATP</name>
        <dbReference type="ChEBI" id="CHEBI:30616"/>
    </ligand>
</feature>